<dbReference type="EC" id="3.2.2.27" evidence="1"/>
<dbReference type="EMBL" id="CP000253">
    <property type="protein sequence ID" value="ABD29710.1"/>
    <property type="molecule type" value="Genomic_DNA"/>
</dbReference>
<dbReference type="RefSeq" id="WP_000455256.1">
    <property type="nucleotide sequence ID" value="NZ_LS483365.1"/>
</dbReference>
<dbReference type="RefSeq" id="YP_499135.1">
    <property type="nucleotide sequence ID" value="NC_007795.1"/>
</dbReference>
<dbReference type="PDB" id="8AIM">
    <property type="method" value="X-ray"/>
    <property type="resolution" value="2.60 A"/>
    <property type="chains" value="A/E=1-218"/>
</dbReference>
<dbReference type="PDB" id="8AIN">
    <property type="method" value="X-ray"/>
    <property type="resolution" value="2.70 A"/>
    <property type="chains" value="A=1-218"/>
</dbReference>
<dbReference type="PDBsum" id="8AIM"/>
<dbReference type="PDBsum" id="8AIN"/>
<dbReference type="SMR" id="Q2G0J7"/>
<dbReference type="STRING" id="93061.SAOUHSC_00564"/>
<dbReference type="PaxDb" id="1280-SAXN108_0637"/>
<dbReference type="GeneID" id="3920608"/>
<dbReference type="KEGG" id="sao:SAOUHSC_00564"/>
<dbReference type="PATRIC" id="fig|93061.5.peg.509"/>
<dbReference type="eggNOG" id="COG0692">
    <property type="taxonomic scope" value="Bacteria"/>
</dbReference>
<dbReference type="HOGENOM" id="CLU_032162_3_1_9"/>
<dbReference type="OrthoDB" id="9804372at2"/>
<dbReference type="PRO" id="PR:Q2G0J7"/>
<dbReference type="Proteomes" id="UP000008816">
    <property type="component" value="Chromosome"/>
</dbReference>
<dbReference type="GO" id="GO:0005737">
    <property type="term" value="C:cytoplasm"/>
    <property type="evidence" value="ECO:0007669"/>
    <property type="project" value="UniProtKB-SubCell"/>
</dbReference>
<dbReference type="GO" id="GO:0004844">
    <property type="term" value="F:uracil DNA N-glycosylase activity"/>
    <property type="evidence" value="ECO:0007669"/>
    <property type="project" value="UniProtKB-UniRule"/>
</dbReference>
<dbReference type="GO" id="GO:0097510">
    <property type="term" value="P:base-excision repair, AP site formation via deaminated base removal"/>
    <property type="evidence" value="ECO:0000318"/>
    <property type="project" value="GO_Central"/>
</dbReference>
<dbReference type="CDD" id="cd10027">
    <property type="entry name" value="UDG-F1-like"/>
    <property type="match status" value="1"/>
</dbReference>
<dbReference type="FunFam" id="3.40.470.10:FF:000001">
    <property type="entry name" value="Uracil-DNA glycosylase"/>
    <property type="match status" value="1"/>
</dbReference>
<dbReference type="Gene3D" id="3.40.470.10">
    <property type="entry name" value="Uracil-DNA glycosylase-like domain"/>
    <property type="match status" value="1"/>
</dbReference>
<dbReference type="HAMAP" id="MF_00148">
    <property type="entry name" value="UDG"/>
    <property type="match status" value="1"/>
</dbReference>
<dbReference type="InterPro" id="IPR002043">
    <property type="entry name" value="UDG_fam1"/>
</dbReference>
<dbReference type="InterPro" id="IPR018085">
    <property type="entry name" value="Ura-DNA_Glyclase_AS"/>
</dbReference>
<dbReference type="InterPro" id="IPR005122">
    <property type="entry name" value="Uracil-DNA_glycosylase-like"/>
</dbReference>
<dbReference type="InterPro" id="IPR036895">
    <property type="entry name" value="Uracil-DNA_glycosylase-like_sf"/>
</dbReference>
<dbReference type="NCBIfam" id="NF003588">
    <property type="entry name" value="PRK05254.1-1"/>
    <property type="match status" value="1"/>
</dbReference>
<dbReference type="NCBIfam" id="NF003589">
    <property type="entry name" value="PRK05254.1-2"/>
    <property type="match status" value="1"/>
</dbReference>
<dbReference type="NCBIfam" id="NF003591">
    <property type="entry name" value="PRK05254.1-4"/>
    <property type="match status" value="1"/>
</dbReference>
<dbReference type="NCBIfam" id="NF003592">
    <property type="entry name" value="PRK05254.1-5"/>
    <property type="match status" value="1"/>
</dbReference>
<dbReference type="NCBIfam" id="TIGR00628">
    <property type="entry name" value="ung"/>
    <property type="match status" value="1"/>
</dbReference>
<dbReference type="PANTHER" id="PTHR11264">
    <property type="entry name" value="URACIL-DNA GLYCOSYLASE"/>
    <property type="match status" value="1"/>
</dbReference>
<dbReference type="PANTHER" id="PTHR11264:SF0">
    <property type="entry name" value="URACIL-DNA GLYCOSYLASE"/>
    <property type="match status" value="1"/>
</dbReference>
<dbReference type="Pfam" id="PF03167">
    <property type="entry name" value="UDG"/>
    <property type="match status" value="1"/>
</dbReference>
<dbReference type="SMART" id="SM00986">
    <property type="entry name" value="UDG"/>
    <property type="match status" value="1"/>
</dbReference>
<dbReference type="SMART" id="SM00987">
    <property type="entry name" value="UreE_C"/>
    <property type="match status" value="1"/>
</dbReference>
<dbReference type="SUPFAM" id="SSF52141">
    <property type="entry name" value="Uracil-DNA glycosylase-like"/>
    <property type="match status" value="1"/>
</dbReference>
<dbReference type="PROSITE" id="PS00130">
    <property type="entry name" value="U_DNA_GLYCOSYLASE"/>
    <property type="match status" value="1"/>
</dbReference>
<sequence length="218" mass="24937">MEWSQIFHDITTKHDFKAMHDFLEKEYSTAIVYPDRENIYQAFDLTPFENIKVVILGQDPYHGPNQAHGLAFSVQPNAKFPPSLRNMYKELADDIGCVRQTPHLQDWAREGVLLLNTVLTVRQGEANSHRDIGWETFTDEIIKAVSDYKEHVVFILWGKPAQQKIKLIDTSKHCIIKSVHPSPLSAYRGFFGSKPYSKANAYLESVGKSPINWCESEA</sequence>
<reference key="1">
    <citation type="book" date="2006" name="Gram positive pathogens, 2nd edition">
        <title>The Staphylococcus aureus NCTC 8325 genome.</title>
        <editorList>
            <person name="Fischetti V."/>
            <person name="Novick R."/>
            <person name="Ferretti J."/>
            <person name="Portnoy D."/>
            <person name="Rood J."/>
        </editorList>
        <authorList>
            <person name="Gillaspy A.F."/>
            <person name="Worrell V."/>
            <person name="Orvis J."/>
            <person name="Roe B.A."/>
            <person name="Dyer D.W."/>
            <person name="Iandolo J.J."/>
        </authorList>
    </citation>
    <scope>NUCLEOTIDE SEQUENCE [LARGE SCALE GENOMIC DNA]</scope>
    <source>
        <strain>NCTC 8325 / PS 47</strain>
    </source>
</reference>
<keyword id="KW-0002">3D-structure</keyword>
<keyword id="KW-0963">Cytoplasm</keyword>
<keyword id="KW-0227">DNA damage</keyword>
<keyword id="KW-0234">DNA repair</keyword>
<keyword id="KW-0378">Hydrolase</keyword>
<keyword id="KW-1185">Reference proteome</keyword>
<comment type="function">
    <text evidence="1">Excises uracil residues from the DNA which can arise as a result of misincorporation of dUMP residues by DNA polymerase or due to deamination of cytosine.</text>
</comment>
<comment type="catalytic activity">
    <reaction evidence="1">
        <text>Hydrolyzes single-stranded DNA or mismatched double-stranded DNA and polynucleotides, releasing free uracil.</text>
        <dbReference type="EC" id="3.2.2.27"/>
    </reaction>
</comment>
<comment type="subcellular location">
    <subcellularLocation>
        <location evidence="1">Cytoplasm</location>
    </subcellularLocation>
</comment>
<comment type="similarity">
    <text evidence="1">Belongs to the uracil-DNA glycosylase (UDG) superfamily. UNG family.</text>
</comment>
<proteinExistence type="evidence at protein level"/>
<organism>
    <name type="scientific">Staphylococcus aureus (strain NCTC 8325 / PS 47)</name>
    <dbReference type="NCBI Taxonomy" id="93061"/>
    <lineage>
        <taxon>Bacteria</taxon>
        <taxon>Bacillati</taxon>
        <taxon>Bacillota</taxon>
        <taxon>Bacilli</taxon>
        <taxon>Bacillales</taxon>
        <taxon>Staphylococcaceae</taxon>
        <taxon>Staphylococcus</taxon>
    </lineage>
</organism>
<gene>
    <name evidence="1" type="primary">ung</name>
    <name type="ordered locus">SAOUHSC_00564</name>
</gene>
<evidence type="ECO:0000255" key="1">
    <source>
        <dbReference type="HAMAP-Rule" id="MF_00148"/>
    </source>
</evidence>
<evidence type="ECO:0007829" key="2">
    <source>
        <dbReference type="PDB" id="8AIM"/>
    </source>
</evidence>
<evidence type="ECO:0007829" key="3">
    <source>
        <dbReference type="PDB" id="8AIN"/>
    </source>
</evidence>
<accession>Q2G0J7</accession>
<protein>
    <recommendedName>
        <fullName evidence="1">Uracil-DNA glycosylase</fullName>
        <shortName evidence="1">UDG</shortName>
        <ecNumber evidence="1">3.2.2.27</ecNumber>
    </recommendedName>
</protein>
<feature type="chain" id="PRO_1000009945" description="Uracil-DNA glycosylase">
    <location>
        <begin position="1"/>
        <end position="218"/>
    </location>
</feature>
<feature type="active site" description="Proton acceptor" evidence="1">
    <location>
        <position position="59"/>
    </location>
</feature>
<feature type="helix" evidence="2">
    <location>
        <begin position="3"/>
        <end position="13"/>
    </location>
</feature>
<feature type="helix" evidence="2">
    <location>
        <begin position="17"/>
        <end position="29"/>
    </location>
</feature>
<feature type="strand" evidence="2">
    <location>
        <begin position="32"/>
        <end position="34"/>
    </location>
</feature>
<feature type="helix" evidence="2">
    <location>
        <begin position="36"/>
        <end position="38"/>
    </location>
</feature>
<feature type="helix" evidence="2">
    <location>
        <begin position="41"/>
        <end position="45"/>
    </location>
</feature>
<feature type="helix" evidence="2">
    <location>
        <begin position="48"/>
        <end position="50"/>
    </location>
</feature>
<feature type="strand" evidence="2">
    <location>
        <begin position="52"/>
        <end position="59"/>
    </location>
</feature>
<feature type="turn" evidence="3">
    <location>
        <begin position="64"/>
        <end position="66"/>
    </location>
</feature>
<feature type="strand" evidence="2">
    <location>
        <begin position="68"/>
        <end position="72"/>
    </location>
</feature>
<feature type="helix" evidence="2">
    <location>
        <begin position="82"/>
        <end position="94"/>
    </location>
</feature>
<feature type="helix" evidence="2">
    <location>
        <begin position="105"/>
        <end position="110"/>
    </location>
</feature>
<feature type="strand" evidence="2">
    <location>
        <begin position="112"/>
        <end position="118"/>
    </location>
</feature>
<feature type="turn" evidence="2">
    <location>
        <begin position="126"/>
        <end position="131"/>
    </location>
</feature>
<feature type="helix" evidence="2">
    <location>
        <begin position="134"/>
        <end position="148"/>
    </location>
</feature>
<feature type="strand" evidence="2">
    <location>
        <begin position="153"/>
        <end position="158"/>
    </location>
</feature>
<feature type="helix" evidence="2">
    <location>
        <begin position="159"/>
        <end position="162"/>
    </location>
</feature>
<feature type="helix" evidence="2">
    <location>
        <begin position="163"/>
        <end position="167"/>
    </location>
</feature>
<feature type="turn" evidence="2">
    <location>
        <begin position="170"/>
        <end position="172"/>
    </location>
</feature>
<feature type="strand" evidence="2">
    <location>
        <begin position="173"/>
        <end position="179"/>
    </location>
</feature>
<feature type="turn" evidence="2">
    <location>
        <begin position="183"/>
        <end position="192"/>
    </location>
</feature>
<feature type="helix" evidence="2">
    <location>
        <begin position="195"/>
        <end position="205"/>
    </location>
</feature>
<name>UNG_STAA8</name>